<accession>Q6CUV9</accession>
<comment type="function">
    <text evidence="1">Forms a complex with the serine/threonine kinase MEC1 which activates checkpoint signaling upon genotoxic stresses. The MEC1-LCD1 complex is recruited to DNA lesions in order to initiates the DNA repair by homologous recombination. Required for cell growth and meiotic recombination (By similarity).</text>
</comment>
<comment type="subunit">
    <text evidence="1">Forms a complex with MEC1.</text>
</comment>
<comment type="subcellular location">
    <subcellularLocation>
        <location evidence="1">Cytoplasm</location>
    </subcellularLocation>
    <subcellularLocation>
        <location evidence="1">Nucleus</location>
    </subcellularLocation>
</comment>
<reference key="1">
    <citation type="journal article" date="2004" name="Nature">
        <title>Genome evolution in yeasts.</title>
        <authorList>
            <person name="Dujon B."/>
            <person name="Sherman D."/>
            <person name="Fischer G."/>
            <person name="Durrens P."/>
            <person name="Casaregola S."/>
            <person name="Lafontaine I."/>
            <person name="de Montigny J."/>
            <person name="Marck C."/>
            <person name="Neuveglise C."/>
            <person name="Talla E."/>
            <person name="Goffard N."/>
            <person name="Frangeul L."/>
            <person name="Aigle M."/>
            <person name="Anthouard V."/>
            <person name="Babour A."/>
            <person name="Barbe V."/>
            <person name="Barnay S."/>
            <person name="Blanchin S."/>
            <person name="Beckerich J.-M."/>
            <person name="Beyne E."/>
            <person name="Bleykasten C."/>
            <person name="Boisrame A."/>
            <person name="Boyer J."/>
            <person name="Cattolico L."/>
            <person name="Confanioleri F."/>
            <person name="de Daruvar A."/>
            <person name="Despons L."/>
            <person name="Fabre E."/>
            <person name="Fairhead C."/>
            <person name="Ferry-Dumazet H."/>
            <person name="Groppi A."/>
            <person name="Hantraye F."/>
            <person name="Hennequin C."/>
            <person name="Jauniaux N."/>
            <person name="Joyet P."/>
            <person name="Kachouri R."/>
            <person name="Kerrest A."/>
            <person name="Koszul R."/>
            <person name="Lemaire M."/>
            <person name="Lesur I."/>
            <person name="Ma L."/>
            <person name="Muller H."/>
            <person name="Nicaud J.-M."/>
            <person name="Nikolski M."/>
            <person name="Oztas S."/>
            <person name="Ozier-Kalogeropoulos O."/>
            <person name="Pellenz S."/>
            <person name="Potier S."/>
            <person name="Richard G.-F."/>
            <person name="Straub M.-L."/>
            <person name="Suleau A."/>
            <person name="Swennen D."/>
            <person name="Tekaia F."/>
            <person name="Wesolowski-Louvel M."/>
            <person name="Westhof E."/>
            <person name="Wirth B."/>
            <person name="Zeniou-Meyer M."/>
            <person name="Zivanovic Y."/>
            <person name="Bolotin-Fukuhara M."/>
            <person name="Thierry A."/>
            <person name="Bouchier C."/>
            <person name="Caudron B."/>
            <person name="Scarpelli C."/>
            <person name="Gaillardin C."/>
            <person name="Weissenbach J."/>
            <person name="Wincker P."/>
            <person name="Souciet J.-L."/>
        </authorList>
    </citation>
    <scope>NUCLEOTIDE SEQUENCE [LARGE SCALE GENOMIC DNA]</scope>
    <source>
        <strain>ATCC 8585 / CBS 2359 / DSM 70799 / NBRC 1267 / NRRL Y-1140 / WM37</strain>
    </source>
</reference>
<name>LCD1_KLULA</name>
<protein>
    <recommendedName>
        <fullName>DNA damage checkpoint protein LCD1</fullName>
    </recommendedName>
</protein>
<sequence>MADLWDDNDDDDDILELVNRPPMSQMAVPIKPPESQAEQLMKAKGEVGVLRQKLSMLEKTLREHDDNQKKLESSLKSSHEEEVTKLKIELERLEDERKFMLLEQKHLFTPRNSSKSETTHETETAEPSPIENKRRRMEPVKEYVTLTQNFKVDDGSLFYDHLLNFKLLGSEHTVLEMLDHICTYKTDLILSPEHKIIKARLPLGPPIRSLIFKWKSIYTLDQLVDKTLEILAIAIKSVSVLPENKLAIPFLISLMHCTINFRHSATSVSSLKDVFQFITDFIISDPKFLKQPLHESPLDLDVSPDVFQYSMLDQLCMTYSFDVLETCIVILLNCNTRAQEIVLNDATIAENLIKCCNFTLSISYKPIMPIIVNVTEILLGIVELDGAENVWKGKWAVLFSKLIQNWERSLTFDSVSLNFAGLNRCCGDNSNHSMIDNIISLEEVRYLPMIIENEFEPLTFTALDNLEYWSIQIQINITLIMHKLLHRYRSTLCSLEFLQKTFSLFSSHQELLLTVFLDRDHISDIKRQELLSVLLKLIYFCWVSISDEYKRALRLDELTICLWRIVYGWPESTDELSTEWAALINPLKALALEEEKKYFDDAYDEDNLPAFMHSEELDIKRESAVSKFNNNSSWPLRDMAKYILESITTMDEADSLYVAMVSET</sequence>
<organism>
    <name type="scientific">Kluyveromyces lactis (strain ATCC 8585 / CBS 2359 / DSM 70799 / NBRC 1267 / NRRL Y-1140 / WM37)</name>
    <name type="common">Yeast</name>
    <name type="synonym">Candida sphaerica</name>
    <dbReference type="NCBI Taxonomy" id="284590"/>
    <lineage>
        <taxon>Eukaryota</taxon>
        <taxon>Fungi</taxon>
        <taxon>Dikarya</taxon>
        <taxon>Ascomycota</taxon>
        <taxon>Saccharomycotina</taxon>
        <taxon>Saccharomycetes</taxon>
        <taxon>Saccharomycetales</taxon>
        <taxon>Saccharomycetaceae</taxon>
        <taxon>Kluyveromyces</taxon>
    </lineage>
</organism>
<proteinExistence type="evidence at protein level"/>
<dbReference type="EMBL" id="CR382123">
    <property type="protein sequence ID" value="CAH01131.1"/>
    <property type="molecule type" value="Genomic_DNA"/>
</dbReference>
<dbReference type="RefSeq" id="XP_452280.1">
    <property type="nucleotide sequence ID" value="XM_452280.1"/>
</dbReference>
<dbReference type="PDB" id="5OMB">
    <property type="method" value="X-ray"/>
    <property type="resolution" value="1.94 A"/>
    <property type="chains" value="C/D=1-109"/>
</dbReference>
<dbReference type="PDB" id="5OMC">
    <property type="method" value="X-ray"/>
    <property type="resolution" value="2.38 A"/>
    <property type="chains" value="C/D=1-109"/>
</dbReference>
<dbReference type="PDBsum" id="5OMB"/>
<dbReference type="PDBsum" id="5OMC"/>
<dbReference type="SMR" id="Q6CUV9"/>
<dbReference type="FunCoup" id="Q6CUV9">
    <property type="interactions" value="195"/>
</dbReference>
<dbReference type="STRING" id="284590.Q6CUV9"/>
<dbReference type="PaxDb" id="284590-Q6CUV9"/>
<dbReference type="KEGG" id="kla:KLLA0_C01892g"/>
<dbReference type="eggNOG" id="ENOG502QQI0">
    <property type="taxonomic scope" value="Eukaryota"/>
</dbReference>
<dbReference type="HOGENOM" id="CLU_402302_0_0_1"/>
<dbReference type="InParanoid" id="Q6CUV9"/>
<dbReference type="OMA" id="IFQYELI"/>
<dbReference type="Proteomes" id="UP000000598">
    <property type="component" value="Chromosome C"/>
</dbReference>
<dbReference type="GO" id="GO:0005737">
    <property type="term" value="C:cytoplasm"/>
    <property type="evidence" value="ECO:0007669"/>
    <property type="project" value="UniProtKB-SubCell"/>
</dbReference>
<dbReference type="GO" id="GO:0005634">
    <property type="term" value="C:nucleus"/>
    <property type="evidence" value="ECO:0007669"/>
    <property type="project" value="UniProtKB-SubCell"/>
</dbReference>
<dbReference type="GO" id="GO:0006325">
    <property type="term" value="P:chromatin organization"/>
    <property type="evidence" value="ECO:0007669"/>
    <property type="project" value="UniProtKB-KW"/>
</dbReference>
<dbReference type="GO" id="GO:0000077">
    <property type="term" value="P:DNA damage checkpoint signaling"/>
    <property type="evidence" value="ECO:0007669"/>
    <property type="project" value="InterPro"/>
</dbReference>
<dbReference type="GO" id="GO:0006281">
    <property type="term" value="P:DNA repair"/>
    <property type="evidence" value="ECO:0007669"/>
    <property type="project" value="UniProtKB-KW"/>
</dbReference>
<dbReference type="InterPro" id="IPR018622">
    <property type="entry name" value="DNA_damage_chkpnt_Lcd1"/>
</dbReference>
<dbReference type="Pfam" id="PF09798">
    <property type="entry name" value="LCD1"/>
    <property type="match status" value="1"/>
</dbReference>
<keyword id="KW-0002">3D-structure</keyword>
<keyword id="KW-0156">Chromatin regulator</keyword>
<keyword id="KW-0175">Coiled coil</keyword>
<keyword id="KW-0963">Cytoplasm</keyword>
<keyword id="KW-0227">DNA damage</keyword>
<keyword id="KW-0234">DNA repair</keyword>
<keyword id="KW-0539">Nucleus</keyword>
<keyword id="KW-0597">Phosphoprotein</keyword>
<keyword id="KW-1185">Reference proteome</keyword>
<evidence type="ECO:0000250" key="1"/>
<evidence type="ECO:0000255" key="2"/>
<evidence type="ECO:0000256" key="3">
    <source>
        <dbReference type="SAM" id="MobiDB-lite"/>
    </source>
</evidence>
<evidence type="ECO:0007829" key="4">
    <source>
        <dbReference type="PDB" id="5OMB"/>
    </source>
</evidence>
<gene>
    <name type="primary">LCD1</name>
    <name type="ordered locus">KLLA0C01892g</name>
</gene>
<feature type="chain" id="PRO_0000227714" description="DNA damage checkpoint protein LCD1">
    <location>
        <begin position="1"/>
        <end position="664"/>
    </location>
</feature>
<feature type="region of interest" description="Disordered" evidence="3">
    <location>
        <begin position="61"/>
        <end position="81"/>
    </location>
</feature>
<feature type="region of interest" description="Disordered" evidence="3">
    <location>
        <begin position="109"/>
        <end position="132"/>
    </location>
</feature>
<feature type="coiled-coil region" evidence="2">
    <location>
        <begin position="38"/>
        <end position="107"/>
    </location>
</feature>
<feature type="helix" evidence="4">
    <location>
        <begin position="12"/>
        <end position="15"/>
    </location>
</feature>
<feature type="turn" evidence="4">
    <location>
        <begin position="16"/>
        <end position="19"/>
    </location>
</feature>
<feature type="helix" evidence="4">
    <location>
        <begin position="36"/>
        <end position="103"/>
    </location>
</feature>